<sequence length="480" mass="53069">MAQFGSVCLPEAFLDVMREAMPAGLAMDDFIAACQRPLRRSIRVNTLKISVDAFLAQVAPYGWQLTPVPWCPEGFWIERDDEDALPLGSTAEHLSGQFYIQEASSMLPVAALFADGNTPARVMDVAAAPGSKTTQIAALMQNQGFILANEYSASRVKVLHANISRCGIHNVGLTHFDGRVFGAALPEQFDAILLDAPCSGEGVVRKDPDALRNWSPQSDQEIAATQRELIDSAFHALAPGGTLVYSTCTLNREENQETVRWLLARYPQAVEVLSLEALFPGADAALTEEGFLHVFPQIYDCEGFFVARLRKTASVEPLPAPTYKVGAFPFTPLKTREAQAVIAAARKVGLEWDETLELWQRDKEIWLFPQAFTPFIGKVRFSRTGIRLAEIHNKGYRWQHEAVVALAGSDNPLGFELSAEEAQEWYRGRDVWPQTVPDADDVIVTFQHQPLGLAKKVGSRLKNSYPRELVRDGVLFSAPV</sequence>
<comment type="function">
    <text evidence="1">Specifically methylates the cytosine at position 1407 (m5C1407) of 16S rRNA.</text>
</comment>
<comment type="catalytic activity">
    <reaction evidence="1">
        <text>cytidine(1407) in 16S rRNA + S-adenosyl-L-methionine = 5-methylcytidine(1407) in 16S rRNA + S-adenosyl-L-homocysteine + H(+)</text>
        <dbReference type="Rhea" id="RHEA:42756"/>
        <dbReference type="Rhea" id="RHEA-COMP:10223"/>
        <dbReference type="Rhea" id="RHEA-COMP:10224"/>
        <dbReference type="ChEBI" id="CHEBI:15378"/>
        <dbReference type="ChEBI" id="CHEBI:57856"/>
        <dbReference type="ChEBI" id="CHEBI:59789"/>
        <dbReference type="ChEBI" id="CHEBI:74483"/>
        <dbReference type="ChEBI" id="CHEBI:82748"/>
        <dbReference type="EC" id="2.1.1.178"/>
    </reaction>
</comment>
<comment type="subcellular location">
    <subcellularLocation>
        <location evidence="1">Cytoplasm</location>
    </subcellularLocation>
</comment>
<comment type="similarity">
    <text evidence="1">Belongs to the class I-like SAM-binding methyltransferase superfamily. RsmB/NOP family.</text>
</comment>
<comment type="sequence caution" evidence="2">
    <conflict type="erroneous initiation">
        <sequence resource="EMBL-CDS" id="ABU76672"/>
    </conflict>
</comment>
<reference key="1">
    <citation type="journal article" date="2010" name="PLoS ONE">
        <title>Genome sequence of Cronobacter sakazakii BAA-894 and comparative genomic hybridization analysis with other Cronobacter species.</title>
        <authorList>
            <person name="Kucerova E."/>
            <person name="Clifton S.W."/>
            <person name="Xia X.Q."/>
            <person name="Long F."/>
            <person name="Porwollik S."/>
            <person name="Fulton L."/>
            <person name="Fronick C."/>
            <person name="Minx P."/>
            <person name="Kyung K."/>
            <person name="Warren W."/>
            <person name="Fulton R."/>
            <person name="Feng D."/>
            <person name="Wollam A."/>
            <person name="Shah N."/>
            <person name="Bhonagiri V."/>
            <person name="Nash W.E."/>
            <person name="Hallsworth-Pepin K."/>
            <person name="Wilson R.K."/>
            <person name="McClelland M."/>
            <person name="Forsythe S.J."/>
        </authorList>
    </citation>
    <scope>NUCLEOTIDE SEQUENCE [LARGE SCALE GENOMIC DNA]</scope>
    <source>
        <strain>ATCC BAA-894</strain>
    </source>
</reference>
<gene>
    <name evidence="1" type="primary">rsmF</name>
    <name type="ordered locus">ESA_01414</name>
</gene>
<feature type="chain" id="PRO_0000382575" description="Ribosomal RNA small subunit methyltransferase F">
    <location>
        <begin position="1"/>
        <end position="480"/>
    </location>
</feature>
<feature type="active site" description="Nucleophile" evidence="1">
    <location>
        <position position="248"/>
    </location>
</feature>
<feature type="binding site" evidence="1">
    <location>
        <begin position="126"/>
        <end position="132"/>
    </location>
    <ligand>
        <name>S-adenosyl-L-methionine</name>
        <dbReference type="ChEBI" id="CHEBI:59789"/>
    </ligand>
</feature>
<feature type="binding site" evidence="1">
    <location>
        <position position="150"/>
    </location>
    <ligand>
        <name>S-adenosyl-L-methionine</name>
        <dbReference type="ChEBI" id="CHEBI:59789"/>
    </ligand>
</feature>
<feature type="binding site" evidence="1">
    <location>
        <position position="177"/>
    </location>
    <ligand>
        <name>S-adenosyl-L-methionine</name>
        <dbReference type="ChEBI" id="CHEBI:59789"/>
    </ligand>
</feature>
<feature type="binding site" evidence="1">
    <location>
        <position position="195"/>
    </location>
    <ligand>
        <name>S-adenosyl-L-methionine</name>
        <dbReference type="ChEBI" id="CHEBI:59789"/>
    </ligand>
</feature>
<name>RSMF_CROS8</name>
<keyword id="KW-0963">Cytoplasm</keyword>
<keyword id="KW-0489">Methyltransferase</keyword>
<keyword id="KW-1185">Reference proteome</keyword>
<keyword id="KW-0694">RNA-binding</keyword>
<keyword id="KW-0698">rRNA processing</keyword>
<keyword id="KW-0949">S-adenosyl-L-methionine</keyword>
<keyword id="KW-0808">Transferase</keyword>
<dbReference type="EC" id="2.1.1.178" evidence="1"/>
<dbReference type="EMBL" id="CP000783">
    <property type="protein sequence ID" value="ABU76672.1"/>
    <property type="status" value="ALT_INIT"/>
    <property type="molecule type" value="Genomic_DNA"/>
</dbReference>
<dbReference type="RefSeq" id="WP_041460475.1">
    <property type="nucleotide sequence ID" value="NC_009778.1"/>
</dbReference>
<dbReference type="SMR" id="A7MKH5"/>
<dbReference type="KEGG" id="esa:ESA_01414"/>
<dbReference type="PATRIC" id="fig|290339.8.peg.1251"/>
<dbReference type="HOGENOM" id="CLU_005316_6_2_6"/>
<dbReference type="Proteomes" id="UP000000260">
    <property type="component" value="Chromosome"/>
</dbReference>
<dbReference type="GO" id="GO:0005737">
    <property type="term" value="C:cytoplasm"/>
    <property type="evidence" value="ECO:0007669"/>
    <property type="project" value="UniProtKB-SubCell"/>
</dbReference>
<dbReference type="GO" id="GO:0003723">
    <property type="term" value="F:RNA binding"/>
    <property type="evidence" value="ECO:0007669"/>
    <property type="project" value="UniProtKB-KW"/>
</dbReference>
<dbReference type="GO" id="GO:0009383">
    <property type="term" value="F:rRNA (cytosine-C5-)-methyltransferase activity"/>
    <property type="evidence" value="ECO:0007669"/>
    <property type="project" value="TreeGrafter"/>
</dbReference>
<dbReference type="GO" id="GO:0070475">
    <property type="term" value="P:rRNA base methylation"/>
    <property type="evidence" value="ECO:0007669"/>
    <property type="project" value="TreeGrafter"/>
</dbReference>
<dbReference type="CDD" id="cd02440">
    <property type="entry name" value="AdoMet_MTases"/>
    <property type="match status" value="1"/>
</dbReference>
<dbReference type="FunFam" id="3.10.450.720:FF:000001">
    <property type="entry name" value="Ribosomal RNA small subunit methyltransferase F"/>
    <property type="match status" value="1"/>
</dbReference>
<dbReference type="FunFam" id="3.40.50.150:FF:000079">
    <property type="entry name" value="Ribosomal RNA small subunit methyltransferase F"/>
    <property type="match status" value="1"/>
</dbReference>
<dbReference type="Gene3D" id="3.10.450.720">
    <property type="match status" value="1"/>
</dbReference>
<dbReference type="Gene3D" id="3.40.50.150">
    <property type="entry name" value="Vaccinia Virus protein VP39"/>
    <property type="match status" value="1"/>
</dbReference>
<dbReference type="HAMAP" id="MF_01579">
    <property type="entry name" value="16SrRNA_methyltr_F"/>
    <property type="match status" value="1"/>
</dbReference>
<dbReference type="InterPro" id="IPR031341">
    <property type="entry name" value="Methyltr_RsmF_N"/>
</dbReference>
<dbReference type="InterPro" id="IPR049560">
    <property type="entry name" value="MeTrfase_RsmB-F_NOP2_cat"/>
</dbReference>
<dbReference type="InterPro" id="IPR001678">
    <property type="entry name" value="MeTrfase_RsmB-F_NOP2_dom"/>
</dbReference>
<dbReference type="InterPro" id="IPR027391">
    <property type="entry name" value="Nol1_Nop2_Fmu_2"/>
</dbReference>
<dbReference type="InterPro" id="IPR011023">
    <property type="entry name" value="Nop2p"/>
</dbReference>
<dbReference type="InterPro" id="IPR023267">
    <property type="entry name" value="RCMT"/>
</dbReference>
<dbReference type="InterPro" id="IPR023545">
    <property type="entry name" value="rRNA_ssu_MeTfrase_F"/>
</dbReference>
<dbReference type="InterPro" id="IPR018314">
    <property type="entry name" value="RsmB/NOL1/NOP2-like_CS"/>
</dbReference>
<dbReference type="InterPro" id="IPR029063">
    <property type="entry name" value="SAM-dependent_MTases_sf"/>
</dbReference>
<dbReference type="InterPro" id="IPR048457">
    <property type="entry name" value="YebU_pre-PUA_dom"/>
</dbReference>
<dbReference type="NCBIfam" id="TIGR00446">
    <property type="entry name" value="nop2p"/>
    <property type="match status" value="1"/>
</dbReference>
<dbReference type="NCBIfam" id="NF008898">
    <property type="entry name" value="PRK11933.1"/>
    <property type="match status" value="1"/>
</dbReference>
<dbReference type="PANTHER" id="PTHR22807:SF30">
    <property type="entry name" value="28S RRNA (CYTOSINE(4447)-C(5))-METHYLTRANSFERASE-RELATED"/>
    <property type="match status" value="1"/>
</dbReference>
<dbReference type="PANTHER" id="PTHR22807">
    <property type="entry name" value="NOP2 YEAST -RELATED NOL1/NOP2/FMU SUN DOMAIN-CONTAINING"/>
    <property type="match status" value="1"/>
</dbReference>
<dbReference type="Pfam" id="PF01189">
    <property type="entry name" value="Methyltr_RsmB-F"/>
    <property type="match status" value="1"/>
</dbReference>
<dbReference type="Pfam" id="PF17125">
    <property type="entry name" value="Methyltr_RsmF_N"/>
    <property type="match status" value="1"/>
</dbReference>
<dbReference type="Pfam" id="PF13636">
    <property type="entry name" value="Methyltranf_PUA"/>
    <property type="match status" value="1"/>
</dbReference>
<dbReference type="Pfam" id="PF21150">
    <property type="entry name" value="YebU_pre-PUA_dom"/>
    <property type="match status" value="1"/>
</dbReference>
<dbReference type="PRINTS" id="PR02008">
    <property type="entry name" value="RCMTFAMILY"/>
</dbReference>
<dbReference type="SUPFAM" id="SSF53335">
    <property type="entry name" value="S-adenosyl-L-methionine-dependent methyltransferases"/>
    <property type="match status" value="1"/>
</dbReference>
<dbReference type="PROSITE" id="PS01153">
    <property type="entry name" value="NOL1_NOP2_SUN"/>
    <property type="match status" value="1"/>
</dbReference>
<dbReference type="PROSITE" id="PS51686">
    <property type="entry name" value="SAM_MT_RSMB_NOP"/>
    <property type="match status" value="1"/>
</dbReference>
<proteinExistence type="inferred from homology"/>
<protein>
    <recommendedName>
        <fullName evidence="1">Ribosomal RNA small subunit methyltransferase F</fullName>
        <ecNumber evidence="1">2.1.1.178</ecNumber>
    </recommendedName>
    <alternativeName>
        <fullName evidence="1">16S rRNA m5C1407 methyltransferase</fullName>
    </alternativeName>
    <alternativeName>
        <fullName evidence="1">rRNA (cytosine-C(5)-)-methyltransferase RsmF</fullName>
    </alternativeName>
</protein>
<organism>
    <name type="scientific">Cronobacter sakazakii (strain ATCC BAA-894)</name>
    <name type="common">Enterobacter sakazakii</name>
    <dbReference type="NCBI Taxonomy" id="290339"/>
    <lineage>
        <taxon>Bacteria</taxon>
        <taxon>Pseudomonadati</taxon>
        <taxon>Pseudomonadota</taxon>
        <taxon>Gammaproteobacteria</taxon>
        <taxon>Enterobacterales</taxon>
        <taxon>Enterobacteriaceae</taxon>
        <taxon>Cronobacter</taxon>
    </lineage>
</organism>
<evidence type="ECO:0000255" key="1">
    <source>
        <dbReference type="HAMAP-Rule" id="MF_01579"/>
    </source>
</evidence>
<evidence type="ECO:0000305" key="2"/>
<accession>A7MKH5</accession>